<dbReference type="EMBL" id="L00966">
    <property type="protein sequence ID" value="AAL31342.1"/>
    <property type="molecule type" value="Genomic_DNA"/>
</dbReference>
<dbReference type="EMBL" id="AY261361">
    <property type="status" value="NOT_ANNOTATED_CDS"/>
    <property type="molecule type" value="Genomic_DNA"/>
</dbReference>
<dbReference type="SMR" id="Q8V9S2"/>
<dbReference type="Proteomes" id="UP000000860">
    <property type="component" value="Segment"/>
</dbReference>
<reference key="1">
    <citation type="submission" date="2001-11" db="EMBL/GenBank/DDBJ databases">
        <title>Nucleotide sequence and analysis of 16.25 kilobase pairs of the African swine fever virus genome that span the central variable region.</title>
        <authorList>
            <person name="Roberts P.C."/>
            <person name="Lu Z."/>
            <person name="Rock D.L."/>
        </authorList>
    </citation>
    <scope>NUCLEOTIDE SEQUENCE [GENOMIC DNA]</scope>
</reference>
<reference key="2">
    <citation type="submission" date="2003-03" db="EMBL/GenBank/DDBJ databases">
        <title>African swine fever virus genomes.</title>
        <authorList>
            <person name="Kutish G.F."/>
            <person name="Rock D.L."/>
        </authorList>
    </citation>
    <scope>NUCLEOTIDE SEQUENCE [LARGE SCALE GENOMIC DNA]</scope>
</reference>
<organism>
    <name type="scientific">African swine fever virus (isolate Tick/Malawi/Lil 20-1/1983)</name>
    <name type="common">ASFV</name>
    <dbReference type="NCBI Taxonomy" id="10500"/>
    <lineage>
        <taxon>Viruses</taxon>
        <taxon>Varidnaviria</taxon>
        <taxon>Bamfordvirae</taxon>
        <taxon>Nucleocytoviricota</taxon>
        <taxon>Pokkesviricetes</taxon>
        <taxon>Asfuvirales</taxon>
        <taxon>Asfarviridae</taxon>
        <taxon>Asfivirus</taxon>
        <taxon>African swine fever virus</taxon>
    </lineage>
</organism>
<accession>Q8V9S2</accession>
<organismHost>
    <name type="scientific">Ornithodoros</name>
    <name type="common">relapsing fever ticks</name>
    <dbReference type="NCBI Taxonomy" id="6937"/>
</organismHost>
<organismHost>
    <name type="scientific">Phacochoerus aethiopicus</name>
    <name type="common">Warthog</name>
    <dbReference type="NCBI Taxonomy" id="85517"/>
</organismHost>
<organismHost>
    <name type="scientific">Phacochoerus africanus</name>
    <name type="common">Warthog</name>
    <dbReference type="NCBI Taxonomy" id="41426"/>
</organismHost>
<organismHost>
    <name type="scientific">Potamochoerus larvatus</name>
    <name type="common">Bushpig</name>
    <dbReference type="NCBI Taxonomy" id="273792"/>
</organismHost>
<organismHost>
    <name type="scientific">Sus scrofa</name>
    <name type="common">Pig</name>
    <dbReference type="NCBI Taxonomy" id="9823"/>
</organismHost>
<evidence type="ECO:0000305" key="1"/>
<feature type="chain" id="PRO_0000373502" description="Uncharacterized protein B125R">
    <location>
        <begin position="1"/>
        <end position="125"/>
    </location>
</feature>
<proteinExistence type="inferred from homology"/>
<sequence>MAVYAKDLDNNKELNQKLINDQLKIIDTLLLAEKKNFLVHELPAHYDFSSGDPLASQRDIYYAIIKSLEERGFTVKICMKGDRALLFITWKKIQSIEINKKEEYLRMHFIQDEEKAFYCKFLESR</sequence>
<comment type="induction">
    <text evidence="1">Expressed in the late phase of the viral replicative cycle.</text>
</comment>
<comment type="similarity">
    <text evidence="1">Belongs to the asfivirus B125R family.</text>
</comment>
<name>VF125_ASFM2</name>
<protein>
    <recommendedName>
        <fullName>Uncharacterized protein B125R</fullName>
        <shortName>pB125R</shortName>
    </recommendedName>
</protein>
<keyword id="KW-0426">Late protein</keyword>
<gene>
    <name type="ordered locus">Mal-090</name>
</gene>